<dbReference type="EC" id="3.1.11.6" evidence="1"/>
<dbReference type="EMBL" id="CP000114">
    <property type="protein sequence ID" value="ABA45286.1"/>
    <property type="molecule type" value="Genomic_DNA"/>
</dbReference>
<dbReference type="RefSeq" id="WP_001286939.1">
    <property type="nucleotide sequence ID" value="NC_007432.1"/>
</dbReference>
<dbReference type="SMR" id="Q3K2M4"/>
<dbReference type="KEGG" id="sak:SAK_0597"/>
<dbReference type="HOGENOM" id="CLU_023625_3_1_9"/>
<dbReference type="GO" id="GO:0005737">
    <property type="term" value="C:cytoplasm"/>
    <property type="evidence" value="ECO:0007669"/>
    <property type="project" value="UniProtKB-SubCell"/>
</dbReference>
<dbReference type="GO" id="GO:0009318">
    <property type="term" value="C:exodeoxyribonuclease VII complex"/>
    <property type="evidence" value="ECO:0007669"/>
    <property type="project" value="InterPro"/>
</dbReference>
<dbReference type="GO" id="GO:0008855">
    <property type="term" value="F:exodeoxyribonuclease VII activity"/>
    <property type="evidence" value="ECO:0007669"/>
    <property type="project" value="UniProtKB-UniRule"/>
</dbReference>
<dbReference type="GO" id="GO:0003676">
    <property type="term" value="F:nucleic acid binding"/>
    <property type="evidence" value="ECO:0007669"/>
    <property type="project" value="InterPro"/>
</dbReference>
<dbReference type="GO" id="GO:0006308">
    <property type="term" value="P:DNA catabolic process"/>
    <property type="evidence" value="ECO:0007669"/>
    <property type="project" value="UniProtKB-UniRule"/>
</dbReference>
<dbReference type="CDD" id="cd04489">
    <property type="entry name" value="ExoVII_LU_OBF"/>
    <property type="match status" value="1"/>
</dbReference>
<dbReference type="HAMAP" id="MF_00378">
    <property type="entry name" value="Exonuc_7_L"/>
    <property type="match status" value="1"/>
</dbReference>
<dbReference type="InterPro" id="IPR003753">
    <property type="entry name" value="Exonuc_VII_L"/>
</dbReference>
<dbReference type="InterPro" id="IPR020579">
    <property type="entry name" value="Exonuc_VII_lsu_C"/>
</dbReference>
<dbReference type="InterPro" id="IPR025824">
    <property type="entry name" value="OB-fold_nuc-bd_dom"/>
</dbReference>
<dbReference type="NCBIfam" id="TIGR00237">
    <property type="entry name" value="xseA"/>
    <property type="match status" value="1"/>
</dbReference>
<dbReference type="PANTHER" id="PTHR30008">
    <property type="entry name" value="EXODEOXYRIBONUCLEASE 7 LARGE SUBUNIT"/>
    <property type="match status" value="1"/>
</dbReference>
<dbReference type="PANTHER" id="PTHR30008:SF0">
    <property type="entry name" value="EXODEOXYRIBONUCLEASE 7 LARGE SUBUNIT"/>
    <property type="match status" value="1"/>
</dbReference>
<dbReference type="Pfam" id="PF02601">
    <property type="entry name" value="Exonuc_VII_L"/>
    <property type="match status" value="1"/>
</dbReference>
<dbReference type="Pfam" id="PF13742">
    <property type="entry name" value="tRNA_anti_2"/>
    <property type="match status" value="1"/>
</dbReference>
<feature type="chain" id="PRO_0000303820" description="Exodeoxyribonuclease 7 large subunit">
    <location>
        <begin position="1"/>
        <end position="446"/>
    </location>
</feature>
<evidence type="ECO:0000255" key="1">
    <source>
        <dbReference type="HAMAP-Rule" id="MF_00378"/>
    </source>
</evidence>
<protein>
    <recommendedName>
        <fullName evidence="1">Exodeoxyribonuclease 7 large subunit</fullName>
        <ecNumber evidence="1">3.1.11.6</ecNumber>
    </recommendedName>
    <alternativeName>
        <fullName evidence="1">Exodeoxyribonuclease VII large subunit</fullName>
        <shortName evidence="1">Exonuclease VII large subunit</shortName>
    </alternativeName>
</protein>
<name>EX7L_STRA1</name>
<keyword id="KW-0963">Cytoplasm</keyword>
<keyword id="KW-0269">Exonuclease</keyword>
<keyword id="KW-0378">Hydrolase</keyword>
<keyword id="KW-0540">Nuclease</keyword>
<organism>
    <name type="scientific">Streptococcus agalactiae serotype Ia (strain ATCC 27591 / A909 / CDC SS700)</name>
    <dbReference type="NCBI Taxonomy" id="205921"/>
    <lineage>
        <taxon>Bacteria</taxon>
        <taxon>Bacillati</taxon>
        <taxon>Bacillota</taxon>
        <taxon>Bacilli</taxon>
        <taxon>Lactobacillales</taxon>
        <taxon>Streptococcaceae</taxon>
        <taxon>Streptococcus</taxon>
    </lineage>
</organism>
<sequence length="446" mass="50738">MSDYLSVSTLTKYLKLKFDKDPYLERVYLTGQVSNFRRRPNHQYFSLKDDKSVIQATMWSGHFKKLGFELEEGMKVNVVGRVQLYEPSGSYSIIVEKAEPDGIGALAIQFEQLKKKLSQAGYFDDRHKQLIPQFVRKIGVVTSPSGAVIRDIITTVSRRFPGVEILLFPTKVQGEGAAQEIAQTIALANEKKDLDLLIVGRGGGSIEDLWAFNEECVVEAIFESRLPVISSVGHETDTTLADFVADRRAATPTAAAELATPVTKIDILSWITERENRMYQSSLRLIRTKEERLQKSKQSVIFRQPERLYDGFLQKLDNLNQQLTYSMRDKLQTVRQKQGLLHQKLQGIDLKQRIHIYQERVVQSRRLLSSTMTSQYDSKLARFEKAQDALISLDSSRIVARGYAIIEKNHTLVSTTNGINEGDHLQVKMQDGLLEVEVKDVRQENI</sequence>
<gene>
    <name evidence="1" type="primary">xseA</name>
    <name type="ordered locus">SAK_0597</name>
</gene>
<comment type="function">
    <text evidence="1">Bidirectionally degrades single-stranded DNA into large acid-insoluble oligonucleotides, which are then degraded further into small acid-soluble oligonucleotides.</text>
</comment>
<comment type="catalytic activity">
    <reaction evidence="1">
        <text>Exonucleolytic cleavage in either 5'- to 3'- or 3'- to 5'-direction to yield nucleoside 5'-phosphates.</text>
        <dbReference type="EC" id="3.1.11.6"/>
    </reaction>
</comment>
<comment type="subunit">
    <text evidence="1">Heterooligomer composed of large and small subunits.</text>
</comment>
<comment type="subcellular location">
    <subcellularLocation>
        <location evidence="1">Cytoplasm</location>
    </subcellularLocation>
</comment>
<comment type="similarity">
    <text evidence="1">Belongs to the XseA family.</text>
</comment>
<reference key="1">
    <citation type="journal article" date="2005" name="Proc. Natl. Acad. Sci. U.S.A.">
        <title>Genome analysis of multiple pathogenic isolates of Streptococcus agalactiae: implications for the microbial 'pan-genome'.</title>
        <authorList>
            <person name="Tettelin H."/>
            <person name="Masignani V."/>
            <person name="Cieslewicz M.J."/>
            <person name="Donati C."/>
            <person name="Medini D."/>
            <person name="Ward N.L."/>
            <person name="Angiuoli S.V."/>
            <person name="Crabtree J."/>
            <person name="Jones A.L."/>
            <person name="Durkin A.S."/>
            <person name="DeBoy R.T."/>
            <person name="Davidsen T.M."/>
            <person name="Mora M."/>
            <person name="Scarselli M."/>
            <person name="Margarit y Ros I."/>
            <person name="Peterson J.D."/>
            <person name="Hauser C.R."/>
            <person name="Sundaram J.P."/>
            <person name="Nelson W.C."/>
            <person name="Madupu R."/>
            <person name="Brinkac L.M."/>
            <person name="Dodson R.J."/>
            <person name="Rosovitz M.J."/>
            <person name="Sullivan S.A."/>
            <person name="Daugherty S.C."/>
            <person name="Haft D.H."/>
            <person name="Selengut J."/>
            <person name="Gwinn M.L."/>
            <person name="Zhou L."/>
            <person name="Zafar N."/>
            <person name="Khouri H."/>
            <person name="Radune D."/>
            <person name="Dimitrov G."/>
            <person name="Watkins K."/>
            <person name="O'Connor K.J."/>
            <person name="Smith S."/>
            <person name="Utterback T.R."/>
            <person name="White O."/>
            <person name="Rubens C.E."/>
            <person name="Grandi G."/>
            <person name="Madoff L.C."/>
            <person name="Kasper D.L."/>
            <person name="Telford J.L."/>
            <person name="Wessels M.R."/>
            <person name="Rappuoli R."/>
            <person name="Fraser C.M."/>
        </authorList>
    </citation>
    <scope>NUCLEOTIDE SEQUENCE [LARGE SCALE GENOMIC DNA]</scope>
    <source>
        <strain>ATCC 27591 / A909 / CDC SS700</strain>
    </source>
</reference>
<accession>Q3K2M4</accession>
<proteinExistence type="inferred from homology"/>